<proteinExistence type="inferred from homology"/>
<protein>
    <recommendedName>
        <fullName evidence="1">Phospho-N-acetylmuramoyl-pentapeptide-transferase</fullName>
        <ecNumber evidence="1">2.7.8.13</ecNumber>
    </recommendedName>
    <alternativeName>
        <fullName evidence="1">UDP-MurNAc-pentapeptide phosphotransferase</fullName>
    </alternativeName>
</protein>
<accession>C0Q8P0</accession>
<sequence>MLFHYLYPLHTEISFFNLFRYITFRTIYGGLTAFLICFLLGPWVINRLSRMQIGQFIQNDGPETHFEKEGTPTMGGILILFSLGVSTLLWADLTNHYILITLLSMLLFGAIGFIDDYLMQVKKRNMGFTARGKFLVQIMAGLVISYLVYLCPDFDTSLSIPFLKNFTPDLGIWYIPFATLVIVGTSNAVNLTDGLDGLAIGPIIIAGVTYMIFAYVASHITIASYLQVKHIASCGEITIVCGILAGAGLGFLWFNAHPAQVFMGDTGSIPLGAILGTIAVITKQEILLLVVGGLFVIEALSVIIQVGYFKLSKGKRVFRMAPLHHHFELKGWPESKVIVRFWIIAITLALISLSTLKIR</sequence>
<reference key="1">
    <citation type="journal article" date="2009" name="Environ. Microbiol.">
        <title>Genome sequence of Desulfobacterium autotrophicum HRM2, a marine sulfate reducer oxidizing organic carbon completely to carbon dioxide.</title>
        <authorList>
            <person name="Strittmatter A.W."/>
            <person name="Liesegang H."/>
            <person name="Rabus R."/>
            <person name="Decker I."/>
            <person name="Amann J."/>
            <person name="Andres S."/>
            <person name="Henne A."/>
            <person name="Fricke W.F."/>
            <person name="Martinez-Arias R."/>
            <person name="Bartels D."/>
            <person name="Goesmann A."/>
            <person name="Krause L."/>
            <person name="Puehler A."/>
            <person name="Klenk H.P."/>
            <person name="Richter M."/>
            <person name="Schuler M."/>
            <person name="Gloeckner F.O."/>
            <person name="Meyerdierks A."/>
            <person name="Gottschalk G."/>
            <person name="Amann R."/>
        </authorList>
    </citation>
    <scope>NUCLEOTIDE SEQUENCE [LARGE SCALE GENOMIC DNA]</scope>
    <source>
        <strain>ATCC 43914 / DSM 3382 / VKM B-1955 / HRM2</strain>
    </source>
</reference>
<gene>
    <name evidence="1" type="primary">mraY</name>
    <name type="ordered locus">HRM2_12680</name>
</gene>
<dbReference type="EC" id="2.7.8.13" evidence="1"/>
<dbReference type="EMBL" id="CP001087">
    <property type="protein sequence ID" value="ACN14380.1"/>
    <property type="molecule type" value="Genomic_DNA"/>
</dbReference>
<dbReference type="RefSeq" id="WP_015903167.1">
    <property type="nucleotide sequence ID" value="NC_012108.1"/>
</dbReference>
<dbReference type="SMR" id="C0Q8P0"/>
<dbReference type="STRING" id="177437.HRM2_12680"/>
<dbReference type="KEGG" id="dat:HRM2_12680"/>
<dbReference type="eggNOG" id="COG0472">
    <property type="taxonomic scope" value="Bacteria"/>
</dbReference>
<dbReference type="HOGENOM" id="CLU_023982_0_0_7"/>
<dbReference type="OrthoDB" id="9805475at2"/>
<dbReference type="UniPathway" id="UPA00219"/>
<dbReference type="Proteomes" id="UP000000442">
    <property type="component" value="Chromosome"/>
</dbReference>
<dbReference type="GO" id="GO:0005886">
    <property type="term" value="C:plasma membrane"/>
    <property type="evidence" value="ECO:0007669"/>
    <property type="project" value="UniProtKB-SubCell"/>
</dbReference>
<dbReference type="GO" id="GO:0046872">
    <property type="term" value="F:metal ion binding"/>
    <property type="evidence" value="ECO:0007669"/>
    <property type="project" value="UniProtKB-KW"/>
</dbReference>
<dbReference type="GO" id="GO:0008963">
    <property type="term" value="F:phospho-N-acetylmuramoyl-pentapeptide-transferase activity"/>
    <property type="evidence" value="ECO:0007669"/>
    <property type="project" value="UniProtKB-UniRule"/>
</dbReference>
<dbReference type="GO" id="GO:0051992">
    <property type="term" value="F:UDP-N-acetylmuramoyl-L-alanyl-D-glutamyl-meso-2,6-diaminopimelyl-D-alanyl-D-alanine:undecaprenyl-phosphate transferase activity"/>
    <property type="evidence" value="ECO:0007669"/>
    <property type="project" value="RHEA"/>
</dbReference>
<dbReference type="GO" id="GO:0051301">
    <property type="term" value="P:cell division"/>
    <property type="evidence" value="ECO:0007669"/>
    <property type="project" value="UniProtKB-KW"/>
</dbReference>
<dbReference type="GO" id="GO:0071555">
    <property type="term" value="P:cell wall organization"/>
    <property type="evidence" value="ECO:0007669"/>
    <property type="project" value="UniProtKB-KW"/>
</dbReference>
<dbReference type="GO" id="GO:0009252">
    <property type="term" value="P:peptidoglycan biosynthetic process"/>
    <property type="evidence" value="ECO:0007669"/>
    <property type="project" value="UniProtKB-UniRule"/>
</dbReference>
<dbReference type="GO" id="GO:0008360">
    <property type="term" value="P:regulation of cell shape"/>
    <property type="evidence" value="ECO:0007669"/>
    <property type="project" value="UniProtKB-KW"/>
</dbReference>
<dbReference type="CDD" id="cd06852">
    <property type="entry name" value="GT_MraY"/>
    <property type="match status" value="1"/>
</dbReference>
<dbReference type="HAMAP" id="MF_00038">
    <property type="entry name" value="MraY"/>
    <property type="match status" value="1"/>
</dbReference>
<dbReference type="InterPro" id="IPR000715">
    <property type="entry name" value="Glycosyl_transferase_4"/>
</dbReference>
<dbReference type="InterPro" id="IPR003524">
    <property type="entry name" value="PNAcMuramoyl-5peptid_Trfase"/>
</dbReference>
<dbReference type="InterPro" id="IPR018480">
    <property type="entry name" value="PNAcMuramoyl-5peptid_Trfase_CS"/>
</dbReference>
<dbReference type="NCBIfam" id="TIGR00445">
    <property type="entry name" value="mraY"/>
    <property type="match status" value="1"/>
</dbReference>
<dbReference type="PANTHER" id="PTHR22926">
    <property type="entry name" value="PHOSPHO-N-ACETYLMURAMOYL-PENTAPEPTIDE-TRANSFERASE"/>
    <property type="match status" value="1"/>
</dbReference>
<dbReference type="PANTHER" id="PTHR22926:SF5">
    <property type="entry name" value="PHOSPHO-N-ACETYLMURAMOYL-PENTAPEPTIDE-TRANSFERASE HOMOLOG"/>
    <property type="match status" value="1"/>
</dbReference>
<dbReference type="Pfam" id="PF00953">
    <property type="entry name" value="Glycos_transf_4"/>
    <property type="match status" value="1"/>
</dbReference>
<dbReference type="Pfam" id="PF10555">
    <property type="entry name" value="MraY_sig1"/>
    <property type="match status" value="1"/>
</dbReference>
<dbReference type="PROSITE" id="PS01347">
    <property type="entry name" value="MRAY_1"/>
    <property type="match status" value="1"/>
</dbReference>
<dbReference type="PROSITE" id="PS01348">
    <property type="entry name" value="MRAY_2"/>
    <property type="match status" value="1"/>
</dbReference>
<keyword id="KW-0131">Cell cycle</keyword>
<keyword id="KW-0132">Cell division</keyword>
<keyword id="KW-0997">Cell inner membrane</keyword>
<keyword id="KW-1003">Cell membrane</keyword>
<keyword id="KW-0133">Cell shape</keyword>
<keyword id="KW-0961">Cell wall biogenesis/degradation</keyword>
<keyword id="KW-0460">Magnesium</keyword>
<keyword id="KW-0472">Membrane</keyword>
<keyword id="KW-0479">Metal-binding</keyword>
<keyword id="KW-0573">Peptidoglycan synthesis</keyword>
<keyword id="KW-1185">Reference proteome</keyword>
<keyword id="KW-0808">Transferase</keyword>
<keyword id="KW-0812">Transmembrane</keyword>
<keyword id="KW-1133">Transmembrane helix</keyword>
<evidence type="ECO:0000255" key="1">
    <source>
        <dbReference type="HAMAP-Rule" id="MF_00038"/>
    </source>
</evidence>
<organism>
    <name type="scientific">Desulforapulum autotrophicum (strain ATCC 43914 / DSM 3382 / VKM B-1955 / HRM2)</name>
    <name type="common">Desulfobacterium autotrophicum</name>
    <dbReference type="NCBI Taxonomy" id="177437"/>
    <lineage>
        <taxon>Bacteria</taxon>
        <taxon>Pseudomonadati</taxon>
        <taxon>Thermodesulfobacteriota</taxon>
        <taxon>Desulfobacteria</taxon>
        <taxon>Desulfobacterales</taxon>
        <taxon>Desulfobacteraceae</taxon>
        <taxon>Desulforapulum</taxon>
    </lineage>
</organism>
<feature type="chain" id="PRO_1000202064" description="Phospho-N-acetylmuramoyl-pentapeptide-transferase">
    <location>
        <begin position="1"/>
        <end position="359"/>
    </location>
</feature>
<feature type="transmembrane region" description="Helical" evidence="1">
    <location>
        <begin position="26"/>
        <end position="46"/>
    </location>
</feature>
<feature type="transmembrane region" description="Helical" evidence="1">
    <location>
        <begin position="73"/>
        <end position="93"/>
    </location>
</feature>
<feature type="transmembrane region" description="Helical" evidence="1">
    <location>
        <begin position="98"/>
        <end position="118"/>
    </location>
</feature>
<feature type="transmembrane region" description="Helical" evidence="1">
    <location>
        <begin position="134"/>
        <end position="154"/>
    </location>
</feature>
<feature type="transmembrane region" description="Helical" evidence="1">
    <location>
        <begin position="166"/>
        <end position="186"/>
    </location>
</feature>
<feature type="transmembrane region" description="Helical" evidence="1">
    <location>
        <begin position="197"/>
        <end position="217"/>
    </location>
</feature>
<feature type="transmembrane region" description="Helical" evidence="1">
    <location>
        <begin position="234"/>
        <end position="254"/>
    </location>
</feature>
<feature type="transmembrane region" description="Helical" evidence="1">
    <location>
        <begin position="261"/>
        <end position="281"/>
    </location>
</feature>
<feature type="transmembrane region" description="Helical" evidence="1">
    <location>
        <begin position="286"/>
        <end position="306"/>
    </location>
</feature>
<feature type="transmembrane region" description="Helical" evidence="1">
    <location>
        <begin position="338"/>
        <end position="358"/>
    </location>
</feature>
<name>MRAY_DESAH</name>
<comment type="function">
    <text evidence="1">Catalyzes the initial step of the lipid cycle reactions in the biosynthesis of the cell wall peptidoglycan: transfers peptidoglycan precursor phospho-MurNAc-pentapeptide from UDP-MurNAc-pentapeptide onto the lipid carrier undecaprenyl phosphate, yielding undecaprenyl-pyrophosphoryl-MurNAc-pentapeptide, known as lipid I.</text>
</comment>
<comment type="catalytic activity">
    <reaction evidence="1">
        <text>UDP-N-acetyl-alpha-D-muramoyl-L-alanyl-gamma-D-glutamyl-meso-2,6-diaminopimeloyl-D-alanyl-D-alanine + di-trans,octa-cis-undecaprenyl phosphate = di-trans,octa-cis-undecaprenyl diphospho-N-acetyl-alpha-D-muramoyl-L-alanyl-D-glutamyl-meso-2,6-diaminopimeloyl-D-alanyl-D-alanine + UMP</text>
        <dbReference type="Rhea" id="RHEA:28386"/>
        <dbReference type="ChEBI" id="CHEBI:57865"/>
        <dbReference type="ChEBI" id="CHEBI:60392"/>
        <dbReference type="ChEBI" id="CHEBI:61386"/>
        <dbReference type="ChEBI" id="CHEBI:61387"/>
        <dbReference type="EC" id="2.7.8.13"/>
    </reaction>
</comment>
<comment type="cofactor">
    <cofactor evidence="1">
        <name>Mg(2+)</name>
        <dbReference type="ChEBI" id="CHEBI:18420"/>
    </cofactor>
</comment>
<comment type="pathway">
    <text evidence="1">Cell wall biogenesis; peptidoglycan biosynthesis.</text>
</comment>
<comment type="subcellular location">
    <subcellularLocation>
        <location evidence="1">Cell inner membrane</location>
        <topology evidence="1">Multi-pass membrane protein</topology>
    </subcellularLocation>
</comment>
<comment type="similarity">
    <text evidence="1">Belongs to the glycosyltransferase 4 family. MraY subfamily.</text>
</comment>